<proteinExistence type="inferred from homology"/>
<evidence type="ECO:0000255" key="1">
    <source>
        <dbReference type="HAMAP-Rule" id="MF_00154"/>
    </source>
</evidence>
<dbReference type="EC" id="2.5.1.141" evidence="1"/>
<dbReference type="EMBL" id="CP000107">
    <property type="protein sequence ID" value="AAZ68842.1"/>
    <property type="molecule type" value="Genomic_DNA"/>
</dbReference>
<dbReference type="RefSeq" id="WP_011304919.1">
    <property type="nucleotide sequence ID" value="NC_007354.1"/>
</dbReference>
<dbReference type="SMR" id="Q3YR13"/>
<dbReference type="FunCoup" id="Q3YR13">
    <property type="interactions" value="252"/>
</dbReference>
<dbReference type="STRING" id="269484.Ecaj_0811"/>
<dbReference type="KEGG" id="ecn:Ecaj_0811"/>
<dbReference type="eggNOG" id="COG0109">
    <property type="taxonomic scope" value="Bacteria"/>
</dbReference>
<dbReference type="HOGENOM" id="CLU_029631_0_2_5"/>
<dbReference type="InParanoid" id="Q3YR13"/>
<dbReference type="UniPathway" id="UPA00834">
    <property type="reaction ID" value="UER00712"/>
</dbReference>
<dbReference type="Proteomes" id="UP000000435">
    <property type="component" value="Chromosome"/>
</dbReference>
<dbReference type="GO" id="GO:0005886">
    <property type="term" value="C:plasma membrane"/>
    <property type="evidence" value="ECO:0007669"/>
    <property type="project" value="UniProtKB-SubCell"/>
</dbReference>
<dbReference type="GO" id="GO:0008495">
    <property type="term" value="F:protoheme IX farnesyltransferase activity"/>
    <property type="evidence" value="ECO:0007669"/>
    <property type="project" value="UniProtKB-UniRule"/>
</dbReference>
<dbReference type="GO" id="GO:0048034">
    <property type="term" value="P:heme O biosynthetic process"/>
    <property type="evidence" value="ECO:0007669"/>
    <property type="project" value="UniProtKB-UniRule"/>
</dbReference>
<dbReference type="CDD" id="cd13957">
    <property type="entry name" value="PT_UbiA_Cox10"/>
    <property type="match status" value="1"/>
</dbReference>
<dbReference type="Gene3D" id="1.10.357.140">
    <property type="entry name" value="UbiA prenyltransferase"/>
    <property type="match status" value="1"/>
</dbReference>
<dbReference type="HAMAP" id="MF_00154">
    <property type="entry name" value="CyoE_CtaB"/>
    <property type="match status" value="1"/>
</dbReference>
<dbReference type="InterPro" id="IPR006369">
    <property type="entry name" value="Protohaem_IX_farnesylTrfase"/>
</dbReference>
<dbReference type="InterPro" id="IPR000537">
    <property type="entry name" value="UbiA_prenyltransferase"/>
</dbReference>
<dbReference type="InterPro" id="IPR030470">
    <property type="entry name" value="UbiA_prenylTrfase_CS"/>
</dbReference>
<dbReference type="InterPro" id="IPR044878">
    <property type="entry name" value="UbiA_sf"/>
</dbReference>
<dbReference type="NCBIfam" id="TIGR01473">
    <property type="entry name" value="cyoE_ctaB"/>
    <property type="match status" value="1"/>
</dbReference>
<dbReference type="NCBIfam" id="NF003349">
    <property type="entry name" value="PRK04375.1-2"/>
    <property type="match status" value="1"/>
</dbReference>
<dbReference type="PANTHER" id="PTHR43448:SF7">
    <property type="entry name" value="4-HYDROXYBENZOATE SOLANESYLTRANSFERASE"/>
    <property type="match status" value="1"/>
</dbReference>
<dbReference type="PANTHER" id="PTHR43448">
    <property type="entry name" value="PROTOHEME IX FARNESYLTRANSFERASE, MITOCHONDRIAL"/>
    <property type="match status" value="1"/>
</dbReference>
<dbReference type="Pfam" id="PF01040">
    <property type="entry name" value="UbiA"/>
    <property type="match status" value="1"/>
</dbReference>
<dbReference type="PROSITE" id="PS00943">
    <property type="entry name" value="UBIA"/>
    <property type="match status" value="1"/>
</dbReference>
<gene>
    <name evidence="1" type="primary">ctaB</name>
    <name type="ordered locus">Ecaj_0811</name>
</gene>
<comment type="function">
    <text evidence="1">Converts heme B (protoheme IX) to heme O by substitution of the vinyl group on carbon 2 of heme B porphyrin ring with a hydroxyethyl farnesyl side group.</text>
</comment>
<comment type="catalytic activity">
    <reaction evidence="1">
        <text>heme b + (2E,6E)-farnesyl diphosphate + H2O = Fe(II)-heme o + diphosphate</text>
        <dbReference type="Rhea" id="RHEA:28070"/>
        <dbReference type="ChEBI" id="CHEBI:15377"/>
        <dbReference type="ChEBI" id="CHEBI:33019"/>
        <dbReference type="ChEBI" id="CHEBI:60344"/>
        <dbReference type="ChEBI" id="CHEBI:60530"/>
        <dbReference type="ChEBI" id="CHEBI:175763"/>
        <dbReference type="EC" id="2.5.1.141"/>
    </reaction>
</comment>
<comment type="pathway">
    <text evidence="1">Porphyrin-containing compound metabolism; heme O biosynthesis; heme O from protoheme: step 1/1.</text>
</comment>
<comment type="subcellular location">
    <subcellularLocation>
        <location evidence="1">Cell inner membrane</location>
        <topology evidence="1">Multi-pass membrane protein</topology>
    </subcellularLocation>
</comment>
<comment type="miscellaneous">
    <text evidence="1">Carbon 2 of the heme B porphyrin ring is defined according to the Fischer nomenclature.</text>
</comment>
<comment type="similarity">
    <text evidence="1">Belongs to the UbiA prenyltransferase family. Protoheme IX farnesyltransferase subfamily.</text>
</comment>
<sequence length="295" mass="32845">MNSKCETIKPQVVNSILDYWNLLKPKIMYLVVLTGITGMIIAPGSIHPFIAIISTLCIALGSGAAGAINMWYDSDIDALMTRTKNRPIPAGKISKSSAIELGLVLSVISVTVMMISVNYISGILLAISIGFYSFAYTMYLKRRTPQNIVIGGIAGAIPPIIGWTSVTSSISIESLILFLIIFMWTPPHFWALSLLNYQEYEKAKIPMLPVTHGIFVTKVHILVYSIVLFIITLLPGLFLKDYLLYEICAIPLGITFLFHAFKVFTSSNYYKYKAMFTYSVAYLFILFICIILASF</sequence>
<reference key="1">
    <citation type="journal article" date="2006" name="J. Bacteriol.">
        <title>The genome of the obligately intracellular bacterium Ehrlichia canis reveals themes of complex membrane structure and immune evasion strategies.</title>
        <authorList>
            <person name="Mavromatis K."/>
            <person name="Doyle C.K."/>
            <person name="Lykidis A."/>
            <person name="Ivanova N."/>
            <person name="Francino M.P."/>
            <person name="Chain P."/>
            <person name="Shin M."/>
            <person name="Malfatti S."/>
            <person name="Larimer F."/>
            <person name="Copeland A."/>
            <person name="Detter J.C."/>
            <person name="Land M."/>
            <person name="Richardson P.M."/>
            <person name="Yu X.J."/>
            <person name="Walker D.H."/>
            <person name="McBride J.W."/>
            <person name="Kyrpides N.C."/>
        </authorList>
    </citation>
    <scope>NUCLEOTIDE SEQUENCE [LARGE SCALE GENOMIC DNA]</scope>
    <source>
        <strain>Jake</strain>
    </source>
</reference>
<protein>
    <recommendedName>
        <fullName evidence="1">Protoheme IX farnesyltransferase</fullName>
        <ecNumber evidence="1">2.5.1.141</ecNumber>
    </recommendedName>
    <alternativeName>
        <fullName evidence="1">Heme B farnesyltransferase</fullName>
    </alternativeName>
    <alternativeName>
        <fullName evidence="1">Heme O synthase</fullName>
    </alternativeName>
</protein>
<name>COXX_EHRCJ</name>
<keyword id="KW-0997">Cell inner membrane</keyword>
<keyword id="KW-1003">Cell membrane</keyword>
<keyword id="KW-0350">Heme biosynthesis</keyword>
<keyword id="KW-0472">Membrane</keyword>
<keyword id="KW-0808">Transferase</keyword>
<keyword id="KW-0812">Transmembrane</keyword>
<keyword id="KW-1133">Transmembrane helix</keyword>
<accession>Q3YR13</accession>
<feature type="chain" id="PRO_0000327048" description="Protoheme IX farnesyltransferase">
    <location>
        <begin position="1"/>
        <end position="295"/>
    </location>
</feature>
<feature type="transmembrane region" description="Helical" evidence="1">
    <location>
        <begin position="27"/>
        <end position="46"/>
    </location>
</feature>
<feature type="transmembrane region" description="Helical" evidence="1">
    <location>
        <begin position="50"/>
        <end position="72"/>
    </location>
</feature>
<feature type="transmembrane region" description="Helical" evidence="1">
    <location>
        <begin position="93"/>
        <end position="115"/>
    </location>
</feature>
<feature type="transmembrane region" description="Helical" evidence="1">
    <location>
        <begin position="119"/>
        <end position="136"/>
    </location>
</feature>
<feature type="transmembrane region" description="Helical" evidence="1">
    <location>
        <begin position="148"/>
        <end position="168"/>
    </location>
</feature>
<feature type="transmembrane region" description="Helical" evidence="1">
    <location>
        <begin position="175"/>
        <end position="195"/>
    </location>
</feature>
<feature type="transmembrane region" description="Helical" evidence="1">
    <location>
        <begin position="219"/>
        <end position="239"/>
    </location>
</feature>
<feature type="transmembrane region" description="Helical" evidence="1">
    <location>
        <begin position="244"/>
        <end position="264"/>
    </location>
</feature>
<feature type="transmembrane region" description="Helical" evidence="1">
    <location>
        <begin position="275"/>
        <end position="295"/>
    </location>
</feature>
<organism>
    <name type="scientific">Ehrlichia canis (strain Jake)</name>
    <dbReference type="NCBI Taxonomy" id="269484"/>
    <lineage>
        <taxon>Bacteria</taxon>
        <taxon>Pseudomonadati</taxon>
        <taxon>Pseudomonadota</taxon>
        <taxon>Alphaproteobacteria</taxon>
        <taxon>Rickettsiales</taxon>
        <taxon>Anaplasmataceae</taxon>
        <taxon>Ehrlichia</taxon>
    </lineage>
</organism>